<sequence>MTIGLAHYLAVAAILFTIGVFGIFVNRKNIIVILMSIELILLAVNINLVAFSVYLGDVVGQIFAMFVLTVAAAEAAVGLAILVTFFRNRGDISVDDASMMKG</sequence>
<keyword id="KW-0997">Cell inner membrane</keyword>
<keyword id="KW-1003">Cell membrane</keyword>
<keyword id="KW-0472">Membrane</keyword>
<keyword id="KW-0520">NAD</keyword>
<keyword id="KW-0874">Quinone</keyword>
<keyword id="KW-1185">Reference proteome</keyword>
<keyword id="KW-1278">Translocase</keyword>
<keyword id="KW-0812">Transmembrane</keyword>
<keyword id="KW-1133">Transmembrane helix</keyword>
<keyword id="KW-0813">Transport</keyword>
<keyword id="KW-0830">Ubiquinone</keyword>
<name>NUOK_PHEZH</name>
<gene>
    <name evidence="1" type="primary">nuoK</name>
    <name type="ordered locus">PHZ_c1794</name>
</gene>
<accession>B4RCL8</accession>
<reference key="1">
    <citation type="journal article" date="2008" name="BMC Genomics">
        <title>Complete genome of Phenylobacterium zucineum - a novel facultative intracellular bacterium isolated from human erythroleukemia cell line K562.</title>
        <authorList>
            <person name="Luo Y."/>
            <person name="Xu X."/>
            <person name="Ding Z."/>
            <person name="Liu Z."/>
            <person name="Zhang B."/>
            <person name="Yan Z."/>
            <person name="Sun J."/>
            <person name="Hu S."/>
            <person name="Hu X."/>
        </authorList>
    </citation>
    <scope>NUCLEOTIDE SEQUENCE [LARGE SCALE GENOMIC DNA]</scope>
    <source>
        <strain>HLK1</strain>
    </source>
</reference>
<dbReference type="EC" id="7.1.1.-" evidence="1"/>
<dbReference type="EMBL" id="CP000747">
    <property type="protein sequence ID" value="ACG78205.1"/>
    <property type="molecule type" value="Genomic_DNA"/>
</dbReference>
<dbReference type="RefSeq" id="WP_012522347.1">
    <property type="nucleotide sequence ID" value="NC_011144.1"/>
</dbReference>
<dbReference type="SMR" id="B4RCL8"/>
<dbReference type="STRING" id="450851.PHZ_c1794"/>
<dbReference type="KEGG" id="pzu:PHZ_c1794"/>
<dbReference type="eggNOG" id="COG0713">
    <property type="taxonomic scope" value="Bacteria"/>
</dbReference>
<dbReference type="HOGENOM" id="CLU_144724_2_0_5"/>
<dbReference type="OrthoDB" id="9811124at2"/>
<dbReference type="Proteomes" id="UP000001868">
    <property type="component" value="Chromosome"/>
</dbReference>
<dbReference type="GO" id="GO:0030964">
    <property type="term" value="C:NADH dehydrogenase complex"/>
    <property type="evidence" value="ECO:0007669"/>
    <property type="project" value="TreeGrafter"/>
</dbReference>
<dbReference type="GO" id="GO:0005886">
    <property type="term" value="C:plasma membrane"/>
    <property type="evidence" value="ECO:0007669"/>
    <property type="project" value="UniProtKB-SubCell"/>
</dbReference>
<dbReference type="GO" id="GO:0050136">
    <property type="term" value="F:NADH:ubiquinone reductase (non-electrogenic) activity"/>
    <property type="evidence" value="ECO:0007669"/>
    <property type="project" value="UniProtKB-UniRule"/>
</dbReference>
<dbReference type="GO" id="GO:0048038">
    <property type="term" value="F:quinone binding"/>
    <property type="evidence" value="ECO:0007669"/>
    <property type="project" value="UniProtKB-KW"/>
</dbReference>
<dbReference type="GO" id="GO:0042773">
    <property type="term" value="P:ATP synthesis coupled electron transport"/>
    <property type="evidence" value="ECO:0007669"/>
    <property type="project" value="InterPro"/>
</dbReference>
<dbReference type="FunFam" id="1.10.287.3510:FF:000001">
    <property type="entry name" value="NADH-quinone oxidoreductase subunit K"/>
    <property type="match status" value="1"/>
</dbReference>
<dbReference type="Gene3D" id="1.10.287.3510">
    <property type="match status" value="1"/>
</dbReference>
<dbReference type="HAMAP" id="MF_01456">
    <property type="entry name" value="NDH1_NuoK"/>
    <property type="match status" value="1"/>
</dbReference>
<dbReference type="InterPro" id="IPR001133">
    <property type="entry name" value="NADH_UbQ_OxRdtase_chain4L/K"/>
</dbReference>
<dbReference type="InterPro" id="IPR039428">
    <property type="entry name" value="NUOK/Mnh_C1-like"/>
</dbReference>
<dbReference type="NCBIfam" id="NF004320">
    <property type="entry name" value="PRK05715.1-2"/>
    <property type="match status" value="1"/>
</dbReference>
<dbReference type="NCBIfam" id="NF004321">
    <property type="entry name" value="PRK05715.1-3"/>
    <property type="match status" value="1"/>
</dbReference>
<dbReference type="NCBIfam" id="NF004323">
    <property type="entry name" value="PRK05715.1-5"/>
    <property type="match status" value="1"/>
</dbReference>
<dbReference type="PANTHER" id="PTHR11434:SF21">
    <property type="entry name" value="NADH DEHYDROGENASE SUBUNIT 4L-RELATED"/>
    <property type="match status" value="1"/>
</dbReference>
<dbReference type="PANTHER" id="PTHR11434">
    <property type="entry name" value="NADH-UBIQUINONE OXIDOREDUCTASE SUBUNIT ND4L"/>
    <property type="match status" value="1"/>
</dbReference>
<dbReference type="Pfam" id="PF00420">
    <property type="entry name" value="Oxidored_q2"/>
    <property type="match status" value="1"/>
</dbReference>
<evidence type="ECO:0000255" key="1">
    <source>
        <dbReference type="HAMAP-Rule" id="MF_01456"/>
    </source>
</evidence>
<protein>
    <recommendedName>
        <fullName evidence="1">NADH-quinone oxidoreductase subunit K</fullName>
        <ecNumber evidence="1">7.1.1.-</ecNumber>
    </recommendedName>
    <alternativeName>
        <fullName evidence="1">NADH dehydrogenase I subunit K</fullName>
    </alternativeName>
    <alternativeName>
        <fullName evidence="1">NDH-1 subunit K</fullName>
    </alternativeName>
</protein>
<organism>
    <name type="scientific">Phenylobacterium zucineum (strain HLK1)</name>
    <dbReference type="NCBI Taxonomy" id="450851"/>
    <lineage>
        <taxon>Bacteria</taxon>
        <taxon>Pseudomonadati</taxon>
        <taxon>Pseudomonadota</taxon>
        <taxon>Alphaproteobacteria</taxon>
        <taxon>Caulobacterales</taxon>
        <taxon>Caulobacteraceae</taxon>
        <taxon>Phenylobacterium</taxon>
    </lineage>
</organism>
<comment type="function">
    <text evidence="1">NDH-1 shuttles electrons from NADH, via FMN and iron-sulfur (Fe-S) centers, to quinones in the respiratory chain. The immediate electron acceptor for the enzyme in this species is believed to be ubiquinone. Couples the redox reaction to proton translocation (for every two electrons transferred, four hydrogen ions are translocated across the cytoplasmic membrane), and thus conserves the redox energy in a proton gradient.</text>
</comment>
<comment type="catalytic activity">
    <reaction evidence="1">
        <text>a quinone + NADH + 5 H(+)(in) = a quinol + NAD(+) + 4 H(+)(out)</text>
        <dbReference type="Rhea" id="RHEA:57888"/>
        <dbReference type="ChEBI" id="CHEBI:15378"/>
        <dbReference type="ChEBI" id="CHEBI:24646"/>
        <dbReference type="ChEBI" id="CHEBI:57540"/>
        <dbReference type="ChEBI" id="CHEBI:57945"/>
        <dbReference type="ChEBI" id="CHEBI:132124"/>
    </reaction>
</comment>
<comment type="subunit">
    <text evidence="1">NDH-1 is composed of 14 different subunits. Subunits NuoA, H, J, K, L, M, N constitute the membrane sector of the complex.</text>
</comment>
<comment type="subcellular location">
    <subcellularLocation>
        <location evidence="1">Cell inner membrane</location>
        <topology evidence="1">Multi-pass membrane protein</topology>
    </subcellularLocation>
</comment>
<comment type="similarity">
    <text evidence="1">Belongs to the complex I subunit 4L family.</text>
</comment>
<proteinExistence type="inferred from homology"/>
<feature type="chain" id="PRO_0000390158" description="NADH-quinone oxidoreductase subunit K">
    <location>
        <begin position="1"/>
        <end position="102"/>
    </location>
</feature>
<feature type="transmembrane region" description="Helical" evidence="1">
    <location>
        <begin position="5"/>
        <end position="25"/>
    </location>
</feature>
<feature type="transmembrane region" description="Helical" evidence="1">
    <location>
        <begin position="30"/>
        <end position="50"/>
    </location>
</feature>
<feature type="transmembrane region" description="Helical" evidence="1">
    <location>
        <begin position="62"/>
        <end position="82"/>
    </location>
</feature>